<gene>
    <name evidence="1" type="primary">panD</name>
    <name type="ordered locus">Tpet_1803</name>
</gene>
<proteinExistence type="inferred from homology"/>
<dbReference type="EC" id="4.1.1.11" evidence="1"/>
<dbReference type="EMBL" id="CP000702">
    <property type="protein sequence ID" value="ABQ47803.1"/>
    <property type="molecule type" value="Genomic_DNA"/>
</dbReference>
<dbReference type="RefSeq" id="WP_011944207.1">
    <property type="nucleotide sequence ID" value="NC_009486.1"/>
</dbReference>
<dbReference type="SMR" id="A5INN0"/>
<dbReference type="STRING" id="390874.Tpet_1803"/>
<dbReference type="KEGG" id="tpt:Tpet_1803"/>
<dbReference type="eggNOG" id="COG0853">
    <property type="taxonomic scope" value="Bacteria"/>
</dbReference>
<dbReference type="HOGENOM" id="CLU_115305_2_1_0"/>
<dbReference type="UniPathway" id="UPA00028">
    <property type="reaction ID" value="UER00002"/>
</dbReference>
<dbReference type="Proteomes" id="UP000006558">
    <property type="component" value="Chromosome"/>
</dbReference>
<dbReference type="GO" id="GO:0005829">
    <property type="term" value="C:cytosol"/>
    <property type="evidence" value="ECO:0007669"/>
    <property type="project" value="TreeGrafter"/>
</dbReference>
<dbReference type="GO" id="GO:0004068">
    <property type="term" value="F:aspartate 1-decarboxylase activity"/>
    <property type="evidence" value="ECO:0007669"/>
    <property type="project" value="UniProtKB-UniRule"/>
</dbReference>
<dbReference type="GO" id="GO:0006523">
    <property type="term" value="P:alanine biosynthetic process"/>
    <property type="evidence" value="ECO:0007669"/>
    <property type="project" value="InterPro"/>
</dbReference>
<dbReference type="GO" id="GO:0015940">
    <property type="term" value="P:pantothenate biosynthetic process"/>
    <property type="evidence" value="ECO:0007669"/>
    <property type="project" value="UniProtKB-UniRule"/>
</dbReference>
<dbReference type="Gene3D" id="2.40.40.20">
    <property type="match status" value="1"/>
</dbReference>
<dbReference type="HAMAP" id="MF_00446">
    <property type="entry name" value="PanD"/>
    <property type="match status" value="1"/>
</dbReference>
<dbReference type="InterPro" id="IPR009010">
    <property type="entry name" value="Asp_de-COase-like_dom_sf"/>
</dbReference>
<dbReference type="InterPro" id="IPR003190">
    <property type="entry name" value="Asp_decarbox"/>
</dbReference>
<dbReference type="NCBIfam" id="TIGR00223">
    <property type="entry name" value="panD"/>
    <property type="match status" value="1"/>
</dbReference>
<dbReference type="PANTHER" id="PTHR21012">
    <property type="entry name" value="ASPARTATE 1-DECARBOXYLASE"/>
    <property type="match status" value="1"/>
</dbReference>
<dbReference type="PANTHER" id="PTHR21012:SF0">
    <property type="entry name" value="ASPARTATE 1-DECARBOXYLASE"/>
    <property type="match status" value="1"/>
</dbReference>
<dbReference type="Pfam" id="PF02261">
    <property type="entry name" value="Asp_decarbox"/>
    <property type="match status" value="1"/>
</dbReference>
<dbReference type="PIRSF" id="PIRSF006246">
    <property type="entry name" value="Asp_decarbox"/>
    <property type="match status" value="1"/>
</dbReference>
<dbReference type="SUPFAM" id="SSF50692">
    <property type="entry name" value="ADC-like"/>
    <property type="match status" value="1"/>
</dbReference>
<reference key="1">
    <citation type="submission" date="2007-05" db="EMBL/GenBank/DDBJ databases">
        <title>Complete sequence of Thermotoga petrophila RKU-1.</title>
        <authorList>
            <consortium name="US DOE Joint Genome Institute"/>
            <person name="Copeland A."/>
            <person name="Lucas S."/>
            <person name="Lapidus A."/>
            <person name="Barry K."/>
            <person name="Glavina del Rio T."/>
            <person name="Dalin E."/>
            <person name="Tice H."/>
            <person name="Pitluck S."/>
            <person name="Sims D."/>
            <person name="Brettin T."/>
            <person name="Bruce D."/>
            <person name="Detter J.C."/>
            <person name="Han C."/>
            <person name="Tapia R."/>
            <person name="Schmutz J."/>
            <person name="Larimer F."/>
            <person name="Land M."/>
            <person name="Hauser L."/>
            <person name="Kyrpides N."/>
            <person name="Mikhailova N."/>
            <person name="Nelson K."/>
            <person name="Gogarten J.P."/>
            <person name="Noll K."/>
            <person name="Richardson P."/>
        </authorList>
    </citation>
    <scope>NUCLEOTIDE SEQUENCE [LARGE SCALE GENOMIC DNA]</scope>
    <source>
        <strain>ATCC BAA-488 / DSM 13995 / JCM 10881 / RKU-1</strain>
    </source>
</reference>
<protein>
    <recommendedName>
        <fullName evidence="1">Aspartate 1-decarboxylase</fullName>
        <ecNumber evidence="1">4.1.1.11</ecNumber>
    </recommendedName>
    <alternativeName>
        <fullName evidence="1">Aspartate alpha-decarboxylase</fullName>
    </alternativeName>
    <component>
        <recommendedName>
            <fullName evidence="1">Aspartate 1-decarboxylase beta chain</fullName>
        </recommendedName>
    </component>
    <component>
        <recommendedName>
            <fullName evidence="1">Aspartate 1-decarboxylase alpha chain</fullName>
        </recommendedName>
    </component>
</protein>
<keyword id="KW-0068">Autocatalytic cleavage</keyword>
<keyword id="KW-0963">Cytoplasm</keyword>
<keyword id="KW-0210">Decarboxylase</keyword>
<keyword id="KW-0456">Lyase</keyword>
<keyword id="KW-0566">Pantothenate biosynthesis</keyword>
<keyword id="KW-0670">Pyruvate</keyword>
<keyword id="KW-0704">Schiff base</keyword>
<keyword id="KW-0865">Zymogen</keyword>
<feature type="chain" id="PRO_1000026177" description="Aspartate 1-decarboxylase beta chain" evidence="1">
    <location>
        <begin position="1"/>
        <end position="24"/>
    </location>
</feature>
<feature type="chain" id="PRO_0000316068" description="Aspartate 1-decarboxylase alpha chain" evidence="1">
    <location>
        <begin position="25"/>
        <end position="114"/>
    </location>
</feature>
<feature type="active site" description="Schiff-base intermediate with substrate; via pyruvic acid" evidence="1">
    <location>
        <position position="25"/>
    </location>
</feature>
<feature type="active site" description="Proton donor" evidence="1">
    <location>
        <position position="58"/>
    </location>
</feature>
<feature type="binding site" evidence="1">
    <location>
        <position position="57"/>
    </location>
    <ligand>
        <name>substrate</name>
    </ligand>
</feature>
<feature type="binding site" evidence="1">
    <location>
        <begin position="73"/>
        <end position="75"/>
    </location>
    <ligand>
        <name>substrate</name>
    </ligand>
</feature>
<feature type="modified residue" description="Pyruvic acid (Ser)" evidence="1">
    <location>
        <position position="25"/>
    </location>
</feature>
<organism>
    <name type="scientific">Thermotoga petrophila (strain ATCC BAA-488 / DSM 13995 / JCM 10881 / RKU-1)</name>
    <dbReference type="NCBI Taxonomy" id="390874"/>
    <lineage>
        <taxon>Bacteria</taxon>
        <taxon>Thermotogati</taxon>
        <taxon>Thermotogota</taxon>
        <taxon>Thermotogae</taxon>
        <taxon>Thermotogales</taxon>
        <taxon>Thermotogaceae</taxon>
        <taxon>Thermotoga</taxon>
    </lineage>
</organism>
<evidence type="ECO:0000255" key="1">
    <source>
        <dbReference type="HAMAP-Rule" id="MF_00446"/>
    </source>
</evidence>
<comment type="function">
    <text evidence="1">Catalyzes the pyruvoyl-dependent decarboxylation of aspartate to produce beta-alanine.</text>
</comment>
<comment type="catalytic activity">
    <reaction evidence="1">
        <text>L-aspartate + H(+) = beta-alanine + CO2</text>
        <dbReference type="Rhea" id="RHEA:19497"/>
        <dbReference type="ChEBI" id="CHEBI:15378"/>
        <dbReference type="ChEBI" id="CHEBI:16526"/>
        <dbReference type="ChEBI" id="CHEBI:29991"/>
        <dbReference type="ChEBI" id="CHEBI:57966"/>
        <dbReference type="EC" id="4.1.1.11"/>
    </reaction>
</comment>
<comment type="cofactor">
    <cofactor evidence="1">
        <name>pyruvate</name>
        <dbReference type="ChEBI" id="CHEBI:15361"/>
    </cofactor>
    <text evidence="1">Binds 1 pyruvoyl group covalently per subunit.</text>
</comment>
<comment type="pathway">
    <text evidence="1">Cofactor biosynthesis; (R)-pantothenate biosynthesis; beta-alanine from L-aspartate: step 1/1.</text>
</comment>
<comment type="subunit">
    <text evidence="1">Heterooctamer of four alpha and four beta subunits.</text>
</comment>
<comment type="subcellular location">
    <subcellularLocation>
        <location evidence="1">Cytoplasm</location>
    </subcellularLocation>
</comment>
<comment type="PTM">
    <text evidence="1">Is synthesized initially as an inactive proenzyme, which is activated by self-cleavage at a specific serine bond to produce a beta-subunit with a hydroxyl group at its C-terminus and an alpha-subunit with a pyruvoyl group at its N-terminus.</text>
</comment>
<comment type="similarity">
    <text evidence="1">Belongs to the PanD family.</text>
</comment>
<name>PAND_THEP1</name>
<accession>A5INN0</accession>
<sequence length="114" mass="12865">MLNIYLKSKIHMAKITRKEVYYEGSIEVDEELMEKAGISEGEVVLVVNVNNAARFVTYVIKGKRGSREINLYGAAARLGEEGDRVIIMAFTFSDKPVKAKTIVLNEKNEIIQEK</sequence>